<keyword id="KW-0067">ATP-binding</keyword>
<keyword id="KW-0436">Ligase</keyword>
<keyword id="KW-0547">Nucleotide-binding</keyword>
<keyword id="KW-0648">Protein biosynthesis</keyword>
<dbReference type="EC" id="6.3.5.-" evidence="1"/>
<dbReference type="EMBL" id="AE008384">
    <property type="protein sequence ID" value="AAM30924.1"/>
    <property type="molecule type" value="Genomic_DNA"/>
</dbReference>
<dbReference type="RefSeq" id="WP_011033177.1">
    <property type="nucleotide sequence ID" value="NC_003901.1"/>
</dbReference>
<dbReference type="SMR" id="Q8PXJ0"/>
<dbReference type="GeneID" id="82160263"/>
<dbReference type="KEGG" id="mma:MM_1228"/>
<dbReference type="PATRIC" id="fig|192952.21.peg.1433"/>
<dbReference type="eggNOG" id="arCOG01718">
    <property type="taxonomic scope" value="Archaea"/>
</dbReference>
<dbReference type="HOGENOM" id="CLU_019240_0_0_2"/>
<dbReference type="Proteomes" id="UP000000595">
    <property type="component" value="Chromosome"/>
</dbReference>
<dbReference type="GO" id="GO:0050566">
    <property type="term" value="F:asparaginyl-tRNA synthase (glutamine-hydrolyzing) activity"/>
    <property type="evidence" value="ECO:0007669"/>
    <property type="project" value="RHEA"/>
</dbReference>
<dbReference type="GO" id="GO:0005524">
    <property type="term" value="F:ATP binding"/>
    <property type="evidence" value="ECO:0007669"/>
    <property type="project" value="UniProtKB-KW"/>
</dbReference>
<dbReference type="GO" id="GO:0050567">
    <property type="term" value="F:glutaminyl-tRNA synthase (glutamine-hydrolyzing) activity"/>
    <property type="evidence" value="ECO:0007669"/>
    <property type="project" value="UniProtKB-UniRule"/>
</dbReference>
<dbReference type="GO" id="GO:0070681">
    <property type="term" value="P:glutaminyl-tRNAGln biosynthesis via transamidation"/>
    <property type="evidence" value="ECO:0007669"/>
    <property type="project" value="TreeGrafter"/>
</dbReference>
<dbReference type="GO" id="GO:0006412">
    <property type="term" value="P:translation"/>
    <property type="evidence" value="ECO:0007669"/>
    <property type="project" value="UniProtKB-UniRule"/>
</dbReference>
<dbReference type="FunFam" id="1.10.10.410:FF:000001">
    <property type="entry name" value="Aspartyl/glutamyl-tRNA(Asn/Gln) amidotransferase subunit B"/>
    <property type="match status" value="1"/>
</dbReference>
<dbReference type="FunFam" id="1.10.150.380:FF:000001">
    <property type="entry name" value="Aspartyl/glutamyl-tRNA(Asn/Gln) amidotransferase subunit B"/>
    <property type="match status" value="1"/>
</dbReference>
<dbReference type="Gene3D" id="1.10.10.410">
    <property type="match status" value="1"/>
</dbReference>
<dbReference type="Gene3D" id="1.10.150.380">
    <property type="entry name" value="GatB domain, N-terminal subdomain"/>
    <property type="match status" value="1"/>
</dbReference>
<dbReference type="HAMAP" id="MF_00121">
    <property type="entry name" value="GatB"/>
    <property type="match status" value="1"/>
</dbReference>
<dbReference type="InterPro" id="IPR017959">
    <property type="entry name" value="Asn/Gln-tRNA_amidoTrfase_suB/E"/>
</dbReference>
<dbReference type="InterPro" id="IPR006075">
    <property type="entry name" value="Asn/Gln-tRNA_Trfase_suB/E_cat"/>
</dbReference>
<dbReference type="InterPro" id="IPR018027">
    <property type="entry name" value="Asn/Gln_amidotransferase"/>
</dbReference>
<dbReference type="InterPro" id="IPR003789">
    <property type="entry name" value="Asn/Gln_tRNA_amidoTrase-B-like"/>
</dbReference>
<dbReference type="InterPro" id="IPR004413">
    <property type="entry name" value="GatB"/>
</dbReference>
<dbReference type="InterPro" id="IPR042114">
    <property type="entry name" value="GatB_C_1"/>
</dbReference>
<dbReference type="InterPro" id="IPR023168">
    <property type="entry name" value="GatB_Yqey_C_2"/>
</dbReference>
<dbReference type="InterPro" id="IPR017958">
    <property type="entry name" value="Gln-tRNA_amidoTrfase_suB_CS"/>
</dbReference>
<dbReference type="InterPro" id="IPR014746">
    <property type="entry name" value="Gln_synth/guanido_kin_cat_dom"/>
</dbReference>
<dbReference type="NCBIfam" id="TIGR00133">
    <property type="entry name" value="gatB"/>
    <property type="match status" value="1"/>
</dbReference>
<dbReference type="NCBIfam" id="NF004012">
    <property type="entry name" value="PRK05477.1-2"/>
    <property type="match status" value="1"/>
</dbReference>
<dbReference type="NCBIfam" id="NF004014">
    <property type="entry name" value="PRK05477.1-4"/>
    <property type="match status" value="1"/>
</dbReference>
<dbReference type="PANTHER" id="PTHR11659">
    <property type="entry name" value="GLUTAMYL-TRNA GLN AMIDOTRANSFERASE SUBUNIT B MITOCHONDRIAL AND PROKARYOTIC PET112-RELATED"/>
    <property type="match status" value="1"/>
</dbReference>
<dbReference type="PANTHER" id="PTHR11659:SF0">
    <property type="entry name" value="GLUTAMYL-TRNA(GLN) AMIDOTRANSFERASE SUBUNIT B, MITOCHONDRIAL"/>
    <property type="match status" value="1"/>
</dbReference>
<dbReference type="Pfam" id="PF02934">
    <property type="entry name" value="GatB_N"/>
    <property type="match status" value="1"/>
</dbReference>
<dbReference type="Pfam" id="PF02637">
    <property type="entry name" value="GatB_Yqey"/>
    <property type="match status" value="1"/>
</dbReference>
<dbReference type="SMART" id="SM00845">
    <property type="entry name" value="GatB_Yqey"/>
    <property type="match status" value="1"/>
</dbReference>
<dbReference type="SUPFAM" id="SSF89095">
    <property type="entry name" value="GatB/YqeY motif"/>
    <property type="match status" value="1"/>
</dbReference>
<dbReference type="SUPFAM" id="SSF55931">
    <property type="entry name" value="Glutamine synthetase/guanido kinase"/>
    <property type="match status" value="1"/>
</dbReference>
<dbReference type="PROSITE" id="PS01234">
    <property type="entry name" value="GATB"/>
    <property type="match status" value="1"/>
</dbReference>
<comment type="function">
    <text evidence="1">Allows the formation of correctly charged Asn-tRNA(Asn) or Gln-tRNA(Gln) through the transamidation of misacylated Asp-tRNA(Asn) or Glu-tRNA(Gln) in organisms which lack either or both of asparaginyl-tRNA or glutaminyl-tRNA synthetases. The reaction takes place in the presence of glutamine and ATP through an activated phospho-Asp-tRNA(Asn) or phospho-Glu-tRNA(Gln).</text>
</comment>
<comment type="catalytic activity">
    <reaction evidence="1">
        <text>L-glutamyl-tRNA(Gln) + L-glutamine + ATP + H2O = L-glutaminyl-tRNA(Gln) + L-glutamate + ADP + phosphate + H(+)</text>
        <dbReference type="Rhea" id="RHEA:17521"/>
        <dbReference type="Rhea" id="RHEA-COMP:9681"/>
        <dbReference type="Rhea" id="RHEA-COMP:9684"/>
        <dbReference type="ChEBI" id="CHEBI:15377"/>
        <dbReference type="ChEBI" id="CHEBI:15378"/>
        <dbReference type="ChEBI" id="CHEBI:29985"/>
        <dbReference type="ChEBI" id="CHEBI:30616"/>
        <dbReference type="ChEBI" id="CHEBI:43474"/>
        <dbReference type="ChEBI" id="CHEBI:58359"/>
        <dbReference type="ChEBI" id="CHEBI:78520"/>
        <dbReference type="ChEBI" id="CHEBI:78521"/>
        <dbReference type="ChEBI" id="CHEBI:456216"/>
    </reaction>
</comment>
<comment type="catalytic activity">
    <reaction evidence="1">
        <text>L-aspartyl-tRNA(Asn) + L-glutamine + ATP + H2O = L-asparaginyl-tRNA(Asn) + L-glutamate + ADP + phosphate + 2 H(+)</text>
        <dbReference type="Rhea" id="RHEA:14513"/>
        <dbReference type="Rhea" id="RHEA-COMP:9674"/>
        <dbReference type="Rhea" id="RHEA-COMP:9677"/>
        <dbReference type="ChEBI" id="CHEBI:15377"/>
        <dbReference type="ChEBI" id="CHEBI:15378"/>
        <dbReference type="ChEBI" id="CHEBI:29985"/>
        <dbReference type="ChEBI" id="CHEBI:30616"/>
        <dbReference type="ChEBI" id="CHEBI:43474"/>
        <dbReference type="ChEBI" id="CHEBI:58359"/>
        <dbReference type="ChEBI" id="CHEBI:78515"/>
        <dbReference type="ChEBI" id="CHEBI:78516"/>
        <dbReference type="ChEBI" id="CHEBI:456216"/>
    </reaction>
</comment>
<comment type="subunit">
    <text evidence="1">Heterotrimer of A, B and C subunits.</text>
</comment>
<comment type="similarity">
    <text evidence="1">Belongs to the GatB/GatE family. GatB subfamily.</text>
</comment>
<proteinExistence type="inferred from homology"/>
<accession>Q8PXJ0</accession>
<gene>
    <name evidence="1" type="primary">gatB</name>
    <name type="ordered locus">MM_1228</name>
</gene>
<organism>
    <name type="scientific">Methanosarcina mazei (strain ATCC BAA-159 / DSM 3647 / Goe1 / Go1 / JCM 11833 / OCM 88)</name>
    <name type="common">Methanosarcina frisia</name>
    <dbReference type="NCBI Taxonomy" id="192952"/>
    <lineage>
        <taxon>Archaea</taxon>
        <taxon>Methanobacteriati</taxon>
        <taxon>Methanobacteriota</taxon>
        <taxon>Stenosarchaea group</taxon>
        <taxon>Methanomicrobia</taxon>
        <taxon>Methanosarcinales</taxon>
        <taxon>Methanosarcinaceae</taxon>
        <taxon>Methanosarcina</taxon>
    </lineage>
</organism>
<evidence type="ECO:0000255" key="1">
    <source>
        <dbReference type="HAMAP-Rule" id="MF_00121"/>
    </source>
</evidence>
<sequence>MVYENPDGIRIGLEIHVQLNKLKTKMFCGCSTDYHNAAPNTHTCPVCLGLPGALPVLNKKAVEAAIKVGLALEGEIAEETQFHRKNYFYPDLPKGFQVTQYDYPIVSKGKVVIEGEDGEHVVGITRAHMEEDPGKLVHIGSIEKSKGVLIDYNRSGMPLIETVTEPDMRSPKEARRFLDKFRNILEYLDVFDGNLEGAMRVDANVSVHWGTRVEVKNISSHKGVERALLYEIMRQKNVIRRGGKITQETRHFDEGRGVTISMRTKEEAEDYRYFREPDLMPMRVTGWIPAIKETLPELPDAKRARFMEQYGITDMHARALTSKIMLADFYEGVCAKGVDPKVAATWTADVLLGELNYRDLAISSYDGRTIGFIHAKDPEVENSFKVSDMVELVTLFAEGKVSDRAAVEVIRTILDGNEEKSPSQIIEEKGLFKAEDDLVTRAVAETIAENEAAVQDYLGGTEKSLNFLVGQVMKKTKGTADAKTARELIVKELKG</sequence>
<name>GATB_METMA</name>
<reference key="1">
    <citation type="journal article" date="2002" name="J. Mol. Microbiol. Biotechnol.">
        <title>The genome of Methanosarcina mazei: evidence for lateral gene transfer between Bacteria and Archaea.</title>
        <authorList>
            <person name="Deppenmeier U."/>
            <person name="Johann A."/>
            <person name="Hartsch T."/>
            <person name="Merkl R."/>
            <person name="Schmitz R.A."/>
            <person name="Martinez-Arias R."/>
            <person name="Henne A."/>
            <person name="Wiezer A."/>
            <person name="Baeumer S."/>
            <person name="Jacobi C."/>
            <person name="Brueggemann H."/>
            <person name="Lienard T."/>
            <person name="Christmann A."/>
            <person name="Boemecke M."/>
            <person name="Steckel S."/>
            <person name="Bhattacharyya A."/>
            <person name="Lykidis A."/>
            <person name="Overbeek R."/>
            <person name="Klenk H.-P."/>
            <person name="Gunsalus R.P."/>
            <person name="Fritz H.-J."/>
            <person name="Gottschalk G."/>
        </authorList>
    </citation>
    <scope>NUCLEOTIDE SEQUENCE [LARGE SCALE GENOMIC DNA]</scope>
    <source>
        <strain>ATCC BAA-159 / DSM 3647 / Goe1 / Go1 / JCM 11833 / OCM 88</strain>
    </source>
</reference>
<protein>
    <recommendedName>
        <fullName evidence="1">Aspartyl/glutamyl-tRNA(Asn/Gln) amidotransferase subunit B</fullName>
        <shortName evidence="1">Asp/Glu-ADT subunit B</shortName>
        <ecNumber evidence="1">6.3.5.-</ecNumber>
    </recommendedName>
</protein>
<feature type="chain" id="PRO_0000148873" description="Aspartyl/glutamyl-tRNA(Asn/Gln) amidotransferase subunit B">
    <location>
        <begin position="1"/>
        <end position="495"/>
    </location>
</feature>